<reference key="1">
    <citation type="journal article" date="2006" name="Proc. Natl. Acad. Sci. U.S.A.">
        <title>The complete genome sequence of Lactobacillus bulgaricus reveals extensive and ongoing reductive evolution.</title>
        <authorList>
            <person name="van de Guchte M."/>
            <person name="Penaud S."/>
            <person name="Grimaldi C."/>
            <person name="Barbe V."/>
            <person name="Bryson K."/>
            <person name="Nicolas P."/>
            <person name="Robert C."/>
            <person name="Oztas S."/>
            <person name="Mangenot S."/>
            <person name="Couloux A."/>
            <person name="Loux V."/>
            <person name="Dervyn R."/>
            <person name="Bossy R."/>
            <person name="Bolotin A."/>
            <person name="Batto J.-M."/>
            <person name="Walunas T."/>
            <person name="Gibrat J.-F."/>
            <person name="Bessieres P."/>
            <person name="Weissenbach J."/>
            <person name="Ehrlich S.D."/>
            <person name="Maguin E."/>
        </authorList>
    </citation>
    <scope>NUCLEOTIDE SEQUENCE [LARGE SCALE GENOMIC DNA]</scope>
    <source>
        <strain>ATCC 11842 / DSM 20081 / BCRC 10696 / JCM 1002 / NBRC 13953 / NCIMB 11778 / NCTC 12712 / WDCM 00102 / Lb 14</strain>
    </source>
</reference>
<organism>
    <name type="scientific">Lactobacillus delbrueckii subsp. bulgaricus (strain ATCC 11842 / DSM 20081 / BCRC 10696 / JCM 1002 / NBRC 13953 / NCIMB 11778 / NCTC 12712 / WDCM 00102 / Lb 14)</name>
    <dbReference type="NCBI Taxonomy" id="390333"/>
    <lineage>
        <taxon>Bacteria</taxon>
        <taxon>Bacillati</taxon>
        <taxon>Bacillota</taxon>
        <taxon>Bacilli</taxon>
        <taxon>Lactobacillales</taxon>
        <taxon>Lactobacillaceae</taxon>
        <taxon>Lactobacillus</taxon>
    </lineage>
</organism>
<sequence length="375" mass="42098">MVDNSKIRVVVGMSGGVDSSVSALLLKQQGYDVVGVFMKNWDDTNDDGVCTATEDYEDVKKVADKIGIPYYSINFEKEYWERVFQYFLKEYKAGRTPNPDIMCNTEVKFKSFLEYALDLDADYLAMGHYAKTMVDENGVTHMMRPKDGNKDQTYFLSQLTQEQIKRVMFPLQDLTKPEVRRIAEEAGLVNAKKKDSTGICFIGERNFKHFLSEFLPAQGGDMVTPDGKVVGHHAGLMYYTIGQRQGLGLGSTKESTAPWFVVGKDLEKNQLIVEQGYDSPRLYADRLQASGMTFFTGNPEEDTEFKATAKFRYRQCDVGVTVKYHAASKTADVYFDEPARAVTPGQALVLYNGEECLGGGNIDAAFKDDKKLQLV</sequence>
<evidence type="ECO:0000255" key="1">
    <source>
        <dbReference type="HAMAP-Rule" id="MF_00144"/>
    </source>
</evidence>
<accession>Q1GAS1</accession>
<comment type="function">
    <text evidence="1">Catalyzes the 2-thiolation of uridine at the wobble position (U34) of tRNA, leading to the formation of s(2)U34.</text>
</comment>
<comment type="catalytic activity">
    <reaction evidence="1">
        <text>S-sulfanyl-L-cysteinyl-[protein] + uridine(34) in tRNA + AH2 + ATP = 2-thiouridine(34) in tRNA + L-cysteinyl-[protein] + A + AMP + diphosphate + H(+)</text>
        <dbReference type="Rhea" id="RHEA:47032"/>
        <dbReference type="Rhea" id="RHEA-COMP:10131"/>
        <dbReference type="Rhea" id="RHEA-COMP:11726"/>
        <dbReference type="Rhea" id="RHEA-COMP:11727"/>
        <dbReference type="Rhea" id="RHEA-COMP:11728"/>
        <dbReference type="ChEBI" id="CHEBI:13193"/>
        <dbReference type="ChEBI" id="CHEBI:15378"/>
        <dbReference type="ChEBI" id="CHEBI:17499"/>
        <dbReference type="ChEBI" id="CHEBI:29950"/>
        <dbReference type="ChEBI" id="CHEBI:30616"/>
        <dbReference type="ChEBI" id="CHEBI:33019"/>
        <dbReference type="ChEBI" id="CHEBI:61963"/>
        <dbReference type="ChEBI" id="CHEBI:65315"/>
        <dbReference type="ChEBI" id="CHEBI:87170"/>
        <dbReference type="ChEBI" id="CHEBI:456215"/>
        <dbReference type="EC" id="2.8.1.13"/>
    </reaction>
</comment>
<comment type="subcellular location">
    <subcellularLocation>
        <location evidence="1">Cytoplasm</location>
    </subcellularLocation>
</comment>
<comment type="similarity">
    <text evidence="1">Belongs to the MnmA/TRMU family.</text>
</comment>
<proteinExistence type="inferred from homology"/>
<keyword id="KW-0067">ATP-binding</keyword>
<keyword id="KW-0963">Cytoplasm</keyword>
<keyword id="KW-1015">Disulfide bond</keyword>
<keyword id="KW-0547">Nucleotide-binding</keyword>
<keyword id="KW-1185">Reference proteome</keyword>
<keyword id="KW-0694">RNA-binding</keyword>
<keyword id="KW-0808">Transferase</keyword>
<keyword id="KW-0819">tRNA processing</keyword>
<keyword id="KW-0820">tRNA-binding</keyword>
<dbReference type="EC" id="2.8.1.13" evidence="1"/>
<dbReference type="EMBL" id="CR954253">
    <property type="protein sequence ID" value="CAI97582.1"/>
    <property type="molecule type" value="Genomic_DNA"/>
</dbReference>
<dbReference type="RefSeq" id="WP_003623539.1">
    <property type="nucleotide sequence ID" value="NZ_JQAV01000001.1"/>
</dbReference>
<dbReference type="SMR" id="Q1GAS1"/>
<dbReference type="STRING" id="390333.Ldb0755"/>
<dbReference type="KEGG" id="ldb:Ldb0755"/>
<dbReference type="PATRIC" id="fig|390333.13.peg.44"/>
<dbReference type="eggNOG" id="COG0482">
    <property type="taxonomic scope" value="Bacteria"/>
</dbReference>
<dbReference type="HOGENOM" id="CLU_035188_1_0_9"/>
<dbReference type="BioCyc" id="LDEL390333:LDB_RS03320-MONOMER"/>
<dbReference type="Proteomes" id="UP000001259">
    <property type="component" value="Chromosome"/>
</dbReference>
<dbReference type="GO" id="GO:0005737">
    <property type="term" value="C:cytoplasm"/>
    <property type="evidence" value="ECO:0007669"/>
    <property type="project" value="UniProtKB-SubCell"/>
</dbReference>
<dbReference type="GO" id="GO:0005524">
    <property type="term" value="F:ATP binding"/>
    <property type="evidence" value="ECO:0007669"/>
    <property type="project" value="UniProtKB-KW"/>
</dbReference>
<dbReference type="GO" id="GO:0000049">
    <property type="term" value="F:tRNA binding"/>
    <property type="evidence" value="ECO:0007669"/>
    <property type="project" value="UniProtKB-KW"/>
</dbReference>
<dbReference type="GO" id="GO:0103016">
    <property type="term" value="F:tRNA-uridine 2-sulfurtransferase activity"/>
    <property type="evidence" value="ECO:0007669"/>
    <property type="project" value="UniProtKB-EC"/>
</dbReference>
<dbReference type="GO" id="GO:0002143">
    <property type="term" value="P:tRNA wobble position uridine thiolation"/>
    <property type="evidence" value="ECO:0007669"/>
    <property type="project" value="TreeGrafter"/>
</dbReference>
<dbReference type="CDD" id="cd01998">
    <property type="entry name" value="MnmA_TRMU-like"/>
    <property type="match status" value="1"/>
</dbReference>
<dbReference type="FunFam" id="2.30.30.280:FF:000001">
    <property type="entry name" value="tRNA-specific 2-thiouridylase MnmA"/>
    <property type="match status" value="1"/>
</dbReference>
<dbReference type="FunFam" id="2.40.30.10:FF:000023">
    <property type="entry name" value="tRNA-specific 2-thiouridylase MnmA"/>
    <property type="match status" value="1"/>
</dbReference>
<dbReference type="FunFam" id="3.40.50.620:FF:000004">
    <property type="entry name" value="tRNA-specific 2-thiouridylase MnmA"/>
    <property type="match status" value="1"/>
</dbReference>
<dbReference type="Gene3D" id="2.30.30.280">
    <property type="entry name" value="Adenine nucleotide alpha hydrolases-like domains"/>
    <property type="match status" value="1"/>
</dbReference>
<dbReference type="Gene3D" id="3.40.50.620">
    <property type="entry name" value="HUPs"/>
    <property type="match status" value="1"/>
</dbReference>
<dbReference type="Gene3D" id="2.40.30.10">
    <property type="entry name" value="Translation factors"/>
    <property type="match status" value="1"/>
</dbReference>
<dbReference type="HAMAP" id="MF_00144">
    <property type="entry name" value="tRNA_thiouridyl_MnmA"/>
    <property type="match status" value="1"/>
</dbReference>
<dbReference type="InterPro" id="IPR004506">
    <property type="entry name" value="MnmA-like"/>
</dbReference>
<dbReference type="InterPro" id="IPR046885">
    <property type="entry name" value="MnmA-like_C"/>
</dbReference>
<dbReference type="InterPro" id="IPR046884">
    <property type="entry name" value="MnmA-like_central"/>
</dbReference>
<dbReference type="InterPro" id="IPR023382">
    <property type="entry name" value="MnmA-like_central_sf"/>
</dbReference>
<dbReference type="InterPro" id="IPR014729">
    <property type="entry name" value="Rossmann-like_a/b/a_fold"/>
</dbReference>
<dbReference type="NCBIfam" id="NF001138">
    <property type="entry name" value="PRK00143.1"/>
    <property type="match status" value="1"/>
</dbReference>
<dbReference type="NCBIfam" id="TIGR00420">
    <property type="entry name" value="trmU"/>
    <property type="match status" value="1"/>
</dbReference>
<dbReference type="PANTHER" id="PTHR11933:SF5">
    <property type="entry name" value="MITOCHONDRIAL TRNA-SPECIFIC 2-THIOURIDYLASE 1"/>
    <property type="match status" value="1"/>
</dbReference>
<dbReference type="PANTHER" id="PTHR11933">
    <property type="entry name" value="TRNA 5-METHYLAMINOMETHYL-2-THIOURIDYLATE -METHYLTRANSFERASE"/>
    <property type="match status" value="1"/>
</dbReference>
<dbReference type="Pfam" id="PF03054">
    <property type="entry name" value="tRNA_Me_trans"/>
    <property type="match status" value="1"/>
</dbReference>
<dbReference type="Pfam" id="PF20258">
    <property type="entry name" value="tRNA_Me_trans_C"/>
    <property type="match status" value="1"/>
</dbReference>
<dbReference type="Pfam" id="PF20259">
    <property type="entry name" value="tRNA_Me_trans_M"/>
    <property type="match status" value="1"/>
</dbReference>
<dbReference type="SUPFAM" id="SSF52402">
    <property type="entry name" value="Adenine nucleotide alpha hydrolases-like"/>
    <property type="match status" value="1"/>
</dbReference>
<protein>
    <recommendedName>
        <fullName evidence="1">tRNA-specific 2-thiouridylase MnmA</fullName>
        <ecNumber evidence="1">2.8.1.13</ecNumber>
    </recommendedName>
</protein>
<name>MNMA_LACDA</name>
<gene>
    <name evidence="1" type="primary">mnmA</name>
    <name type="ordered locus">Ldb0755</name>
</gene>
<feature type="chain" id="PRO_0000349671" description="tRNA-specific 2-thiouridylase MnmA">
    <location>
        <begin position="1"/>
        <end position="375"/>
    </location>
</feature>
<feature type="region of interest" description="Interaction with target base in tRNA" evidence="1">
    <location>
        <begin position="98"/>
        <end position="100"/>
    </location>
</feature>
<feature type="region of interest" description="Interaction with tRNA" evidence="1">
    <location>
        <begin position="150"/>
        <end position="152"/>
    </location>
</feature>
<feature type="region of interest" description="Interaction with tRNA" evidence="1">
    <location>
        <begin position="312"/>
        <end position="313"/>
    </location>
</feature>
<feature type="active site" description="Nucleophile" evidence="1">
    <location>
        <position position="103"/>
    </location>
</feature>
<feature type="active site" description="Cysteine persulfide intermediate" evidence="1">
    <location>
        <position position="200"/>
    </location>
</feature>
<feature type="binding site" evidence="1">
    <location>
        <begin position="12"/>
        <end position="19"/>
    </location>
    <ligand>
        <name>ATP</name>
        <dbReference type="ChEBI" id="CHEBI:30616"/>
    </ligand>
</feature>
<feature type="binding site" evidence="1">
    <location>
        <position position="38"/>
    </location>
    <ligand>
        <name>ATP</name>
        <dbReference type="ChEBI" id="CHEBI:30616"/>
    </ligand>
</feature>
<feature type="binding site" evidence="1">
    <location>
        <position position="127"/>
    </location>
    <ligand>
        <name>ATP</name>
        <dbReference type="ChEBI" id="CHEBI:30616"/>
    </ligand>
</feature>
<feature type="site" description="Interaction with tRNA" evidence="1">
    <location>
        <position position="128"/>
    </location>
</feature>
<feature type="site" description="Interaction with tRNA" evidence="1">
    <location>
        <position position="346"/>
    </location>
</feature>
<feature type="disulfide bond" description="Alternate" evidence="1">
    <location>
        <begin position="103"/>
        <end position="200"/>
    </location>
</feature>